<protein>
    <recommendedName>
        <fullName>Mitochondrial inner membrane protease subunit 1</fullName>
        <ecNumber>3.4.21.-</ecNumber>
    </recommendedName>
</protein>
<proteinExistence type="inferred from homology"/>
<feature type="chain" id="PRO_0000314116" description="Mitochondrial inner membrane protease subunit 1">
    <location>
        <begin position="1"/>
        <end position="157"/>
    </location>
</feature>
<feature type="active site" evidence="1">
    <location>
        <position position="35"/>
    </location>
</feature>
<feature type="active site" evidence="1">
    <location>
        <position position="80"/>
    </location>
</feature>
<sequence>MAGMFRIPIAVVQIAAFVHQIHEYLFQVQMTSGPSMMPTLNSGGEFVLLDKLHGRFARSCSVGDVVVSAKPSDSKQHVCKRIIGMPGDTIYVDPTSSNKKITIPLGHVWLAGDNIAHSLDSRNYGPVPMGLIKAKVIARVWPHPHWMSNILNDIDVE</sequence>
<keyword id="KW-0378">Hydrolase</keyword>
<keyword id="KW-0472">Membrane</keyword>
<keyword id="KW-0496">Mitochondrion</keyword>
<keyword id="KW-0999">Mitochondrion inner membrane</keyword>
<keyword id="KW-0645">Protease</keyword>
<keyword id="KW-1185">Reference proteome</keyword>
<reference key="1">
    <citation type="journal article" date="2002" name="Nature">
        <title>The genome sequence of Schizosaccharomyces pombe.</title>
        <authorList>
            <person name="Wood V."/>
            <person name="Gwilliam R."/>
            <person name="Rajandream M.A."/>
            <person name="Lyne M.H."/>
            <person name="Lyne R."/>
            <person name="Stewart A."/>
            <person name="Sgouros J.G."/>
            <person name="Peat N."/>
            <person name="Hayles J."/>
            <person name="Baker S.G."/>
            <person name="Basham D."/>
            <person name="Bowman S."/>
            <person name="Brooks K."/>
            <person name="Brown D."/>
            <person name="Brown S."/>
            <person name="Chillingworth T."/>
            <person name="Churcher C.M."/>
            <person name="Collins M."/>
            <person name="Connor R."/>
            <person name="Cronin A."/>
            <person name="Davis P."/>
            <person name="Feltwell T."/>
            <person name="Fraser A."/>
            <person name="Gentles S."/>
            <person name="Goble A."/>
            <person name="Hamlin N."/>
            <person name="Harris D.E."/>
            <person name="Hidalgo J."/>
            <person name="Hodgson G."/>
            <person name="Holroyd S."/>
            <person name="Hornsby T."/>
            <person name="Howarth S."/>
            <person name="Huckle E.J."/>
            <person name="Hunt S."/>
            <person name="Jagels K."/>
            <person name="James K.D."/>
            <person name="Jones L."/>
            <person name="Jones M."/>
            <person name="Leather S."/>
            <person name="McDonald S."/>
            <person name="McLean J."/>
            <person name="Mooney P."/>
            <person name="Moule S."/>
            <person name="Mungall K.L."/>
            <person name="Murphy L.D."/>
            <person name="Niblett D."/>
            <person name="Odell C."/>
            <person name="Oliver K."/>
            <person name="O'Neil S."/>
            <person name="Pearson D."/>
            <person name="Quail M.A."/>
            <person name="Rabbinowitsch E."/>
            <person name="Rutherford K.M."/>
            <person name="Rutter S."/>
            <person name="Saunders D."/>
            <person name="Seeger K."/>
            <person name="Sharp S."/>
            <person name="Skelton J."/>
            <person name="Simmonds M.N."/>
            <person name="Squares R."/>
            <person name="Squares S."/>
            <person name="Stevens K."/>
            <person name="Taylor K."/>
            <person name="Taylor R.G."/>
            <person name="Tivey A."/>
            <person name="Walsh S.V."/>
            <person name="Warren T."/>
            <person name="Whitehead S."/>
            <person name="Woodward J.R."/>
            <person name="Volckaert G."/>
            <person name="Aert R."/>
            <person name="Robben J."/>
            <person name="Grymonprez B."/>
            <person name="Weltjens I."/>
            <person name="Vanstreels E."/>
            <person name="Rieger M."/>
            <person name="Schaefer M."/>
            <person name="Mueller-Auer S."/>
            <person name="Gabel C."/>
            <person name="Fuchs M."/>
            <person name="Duesterhoeft A."/>
            <person name="Fritzc C."/>
            <person name="Holzer E."/>
            <person name="Moestl D."/>
            <person name="Hilbert H."/>
            <person name="Borzym K."/>
            <person name="Langer I."/>
            <person name="Beck A."/>
            <person name="Lehrach H."/>
            <person name="Reinhardt R."/>
            <person name="Pohl T.M."/>
            <person name="Eger P."/>
            <person name="Zimmermann W."/>
            <person name="Wedler H."/>
            <person name="Wambutt R."/>
            <person name="Purnelle B."/>
            <person name="Goffeau A."/>
            <person name="Cadieu E."/>
            <person name="Dreano S."/>
            <person name="Gloux S."/>
            <person name="Lelaure V."/>
            <person name="Mottier S."/>
            <person name="Galibert F."/>
            <person name="Aves S.J."/>
            <person name="Xiang Z."/>
            <person name="Hunt C."/>
            <person name="Moore K."/>
            <person name="Hurst S.M."/>
            <person name="Lucas M."/>
            <person name="Rochet M."/>
            <person name="Gaillardin C."/>
            <person name="Tallada V.A."/>
            <person name="Garzon A."/>
            <person name="Thode G."/>
            <person name="Daga R.R."/>
            <person name="Cruzado L."/>
            <person name="Jimenez J."/>
            <person name="Sanchez M."/>
            <person name="del Rey F."/>
            <person name="Benito J."/>
            <person name="Dominguez A."/>
            <person name="Revuelta J.L."/>
            <person name="Moreno S."/>
            <person name="Armstrong J."/>
            <person name="Forsburg S.L."/>
            <person name="Cerutti L."/>
            <person name="Lowe T."/>
            <person name="McCombie W.R."/>
            <person name="Paulsen I."/>
            <person name="Potashkin J."/>
            <person name="Shpakovski G.V."/>
            <person name="Ussery D."/>
            <person name="Barrell B.G."/>
            <person name="Nurse P."/>
        </authorList>
    </citation>
    <scope>NUCLEOTIDE SEQUENCE [LARGE SCALE GENOMIC DNA]</scope>
    <source>
        <strain>972 / ATCC 24843</strain>
    </source>
</reference>
<reference key="2">
    <citation type="journal article" date="2006" name="Nat. Biotechnol.">
        <title>ORFeome cloning and global analysis of protein localization in the fission yeast Schizosaccharomyces pombe.</title>
        <authorList>
            <person name="Matsuyama A."/>
            <person name="Arai R."/>
            <person name="Yashiroda Y."/>
            <person name="Shirai A."/>
            <person name="Kamata A."/>
            <person name="Sekido S."/>
            <person name="Kobayashi Y."/>
            <person name="Hashimoto A."/>
            <person name="Hamamoto M."/>
            <person name="Hiraoka Y."/>
            <person name="Horinouchi S."/>
            <person name="Yoshida M."/>
        </authorList>
    </citation>
    <scope>SUBCELLULAR LOCATION [LARGE SCALE ANALYSIS]</scope>
</reference>
<dbReference type="EC" id="3.4.21.-"/>
<dbReference type="EMBL" id="CU329671">
    <property type="protein sequence ID" value="CAA21165.1"/>
    <property type="molecule type" value="Genomic_DNA"/>
</dbReference>
<dbReference type="PIR" id="T40110">
    <property type="entry name" value="T40110"/>
</dbReference>
<dbReference type="SMR" id="O74800"/>
<dbReference type="FunCoup" id="O74800">
    <property type="interactions" value="311"/>
</dbReference>
<dbReference type="STRING" id="284812.O74800"/>
<dbReference type="MEROPS" id="S26.002"/>
<dbReference type="PaxDb" id="4896-SPBC2D10.07c.1"/>
<dbReference type="EnsemblFungi" id="SPBC2D10.07c.1">
    <property type="protein sequence ID" value="SPBC2D10.07c.1:pep"/>
    <property type="gene ID" value="SPBC2D10.07c"/>
</dbReference>
<dbReference type="KEGG" id="spo:2540493"/>
<dbReference type="PomBase" id="SPBC2D10.07c"/>
<dbReference type="VEuPathDB" id="FungiDB:SPBC2D10.07c"/>
<dbReference type="eggNOG" id="KOG0171">
    <property type="taxonomic scope" value="Eukaryota"/>
</dbReference>
<dbReference type="HOGENOM" id="CLU_028723_4_3_1"/>
<dbReference type="InParanoid" id="O74800"/>
<dbReference type="OMA" id="LCKGPSM"/>
<dbReference type="PhylomeDB" id="O74800"/>
<dbReference type="PRO" id="PR:O74800"/>
<dbReference type="Proteomes" id="UP000002485">
    <property type="component" value="Chromosome II"/>
</dbReference>
<dbReference type="GO" id="GO:0042720">
    <property type="term" value="C:mitochondrial inner membrane peptidase complex"/>
    <property type="evidence" value="ECO:0000318"/>
    <property type="project" value="GO_Central"/>
</dbReference>
<dbReference type="GO" id="GO:0005739">
    <property type="term" value="C:mitochondrion"/>
    <property type="evidence" value="ECO:0007005"/>
    <property type="project" value="PomBase"/>
</dbReference>
<dbReference type="GO" id="GO:0004222">
    <property type="term" value="F:metalloendopeptidase activity"/>
    <property type="evidence" value="ECO:0000250"/>
    <property type="project" value="PomBase"/>
</dbReference>
<dbReference type="GO" id="GO:0004252">
    <property type="term" value="F:serine-type endopeptidase activity"/>
    <property type="evidence" value="ECO:0007669"/>
    <property type="project" value="InterPro"/>
</dbReference>
<dbReference type="GO" id="GO:0006627">
    <property type="term" value="P:protein processing involved in protein targeting to mitochondrion"/>
    <property type="evidence" value="ECO:0000318"/>
    <property type="project" value="GO_Central"/>
</dbReference>
<dbReference type="GO" id="GO:0006465">
    <property type="term" value="P:signal peptide processing"/>
    <property type="evidence" value="ECO:0007669"/>
    <property type="project" value="InterPro"/>
</dbReference>
<dbReference type="CDD" id="cd06530">
    <property type="entry name" value="S26_SPase_I"/>
    <property type="match status" value="1"/>
</dbReference>
<dbReference type="Gene3D" id="2.10.109.10">
    <property type="entry name" value="Umud Fragment, subunit A"/>
    <property type="match status" value="1"/>
</dbReference>
<dbReference type="InterPro" id="IPR036286">
    <property type="entry name" value="LexA/Signal_pep-like_sf"/>
</dbReference>
<dbReference type="InterPro" id="IPR052064">
    <property type="entry name" value="Mito_IMP1_subunit"/>
</dbReference>
<dbReference type="InterPro" id="IPR000223">
    <property type="entry name" value="Pept_S26A_signal_pept_1"/>
</dbReference>
<dbReference type="InterPro" id="IPR019757">
    <property type="entry name" value="Pept_S26A_signal_pept_1_Lys-AS"/>
</dbReference>
<dbReference type="InterPro" id="IPR019533">
    <property type="entry name" value="Peptidase_S26"/>
</dbReference>
<dbReference type="NCBIfam" id="TIGR02227">
    <property type="entry name" value="sigpep_I_bact"/>
    <property type="match status" value="1"/>
</dbReference>
<dbReference type="PANTHER" id="PTHR12383:SF16">
    <property type="entry name" value="MITOCHONDRIAL INNER MEMBRANE PROTEASE SUBUNIT 1"/>
    <property type="match status" value="1"/>
</dbReference>
<dbReference type="PANTHER" id="PTHR12383">
    <property type="entry name" value="PROTEASE FAMILY S26 MITOCHONDRIAL INNER MEMBRANE PROTEASE-RELATED"/>
    <property type="match status" value="1"/>
</dbReference>
<dbReference type="Pfam" id="PF10502">
    <property type="entry name" value="Peptidase_S26"/>
    <property type="match status" value="2"/>
</dbReference>
<dbReference type="PRINTS" id="PR00727">
    <property type="entry name" value="LEADERPTASE"/>
</dbReference>
<dbReference type="SUPFAM" id="SSF51306">
    <property type="entry name" value="LexA/Signal peptidase"/>
    <property type="match status" value="1"/>
</dbReference>
<dbReference type="PROSITE" id="PS00760">
    <property type="entry name" value="SPASE_I_2"/>
    <property type="match status" value="1"/>
</dbReference>
<organism>
    <name type="scientific">Schizosaccharomyces pombe (strain 972 / ATCC 24843)</name>
    <name type="common">Fission yeast</name>
    <dbReference type="NCBI Taxonomy" id="284812"/>
    <lineage>
        <taxon>Eukaryota</taxon>
        <taxon>Fungi</taxon>
        <taxon>Dikarya</taxon>
        <taxon>Ascomycota</taxon>
        <taxon>Taphrinomycotina</taxon>
        <taxon>Schizosaccharomycetes</taxon>
        <taxon>Schizosaccharomycetales</taxon>
        <taxon>Schizosaccharomycetaceae</taxon>
        <taxon>Schizosaccharomyces</taxon>
    </lineage>
</organism>
<gene>
    <name type="primary">imp1</name>
    <name type="ORF">SPBC2D10.07c</name>
</gene>
<name>IMP1_SCHPO</name>
<accession>O74800</accession>
<comment type="function">
    <text evidence="1">Catalyzes the removal of transit peptides required for the targeting of proteins from the mitochondrial matrix, across the inner membrane, into the inter-membrane space.</text>
</comment>
<comment type="subunit">
    <text evidence="1">Heterodimer of 2 subunits, imp1 and imp2.</text>
</comment>
<comment type="subcellular location">
    <subcellularLocation>
        <location evidence="3">Mitochondrion inner membrane</location>
    </subcellularLocation>
</comment>
<comment type="similarity">
    <text evidence="2">Belongs to the peptidase S26 family. IMP1 subfamily.</text>
</comment>
<evidence type="ECO:0000250" key="1"/>
<evidence type="ECO:0000305" key="2"/>
<evidence type="ECO:0000305" key="3">
    <source>
    </source>
</evidence>